<comment type="function">
    <text evidence="1">Binds directly to 16S ribosomal RNA.</text>
</comment>
<comment type="similarity">
    <text evidence="1">Belongs to the bacterial ribosomal protein bS20 family.</text>
</comment>
<accession>A2BT63</accession>
<protein>
    <recommendedName>
        <fullName evidence="1">Small ribosomal subunit protein bS20</fullName>
    </recommendedName>
    <alternativeName>
        <fullName evidence="2">30S ribosomal protein S20</fullName>
    </alternativeName>
</protein>
<keyword id="KW-0687">Ribonucleoprotein</keyword>
<keyword id="KW-0689">Ribosomal protein</keyword>
<keyword id="KW-0694">RNA-binding</keyword>
<keyword id="KW-0699">rRNA-binding</keyword>
<proteinExistence type="inferred from homology"/>
<name>RS20_PROMS</name>
<dbReference type="EMBL" id="CP000551">
    <property type="protein sequence ID" value="ABM70974.1"/>
    <property type="molecule type" value="Genomic_DNA"/>
</dbReference>
<dbReference type="RefSeq" id="WP_011819102.1">
    <property type="nucleotide sequence ID" value="NC_008816.1"/>
</dbReference>
<dbReference type="SMR" id="A2BT63"/>
<dbReference type="STRING" id="146891.A9601_16911"/>
<dbReference type="KEGG" id="pmb:A9601_16911"/>
<dbReference type="eggNOG" id="COG0268">
    <property type="taxonomic scope" value="Bacteria"/>
</dbReference>
<dbReference type="HOGENOM" id="CLU_160655_5_0_3"/>
<dbReference type="OrthoDB" id="9808392at2"/>
<dbReference type="Proteomes" id="UP000002590">
    <property type="component" value="Chromosome"/>
</dbReference>
<dbReference type="GO" id="GO:0015935">
    <property type="term" value="C:small ribosomal subunit"/>
    <property type="evidence" value="ECO:0007669"/>
    <property type="project" value="TreeGrafter"/>
</dbReference>
<dbReference type="GO" id="GO:0070181">
    <property type="term" value="F:small ribosomal subunit rRNA binding"/>
    <property type="evidence" value="ECO:0007669"/>
    <property type="project" value="TreeGrafter"/>
</dbReference>
<dbReference type="GO" id="GO:0003735">
    <property type="term" value="F:structural constituent of ribosome"/>
    <property type="evidence" value="ECO:0007669"/>
    <property type="project" value="InterPro"/>
</dbReference>
<dbReference type="GO" id="GO:0006412">
    <property type="term" value="P:translation"/>
    <property type="evidence" value="ECO:0007669"/>
    <property type="project" value="UniProtKB-UniRule"/>
</dbReference>
<dbReference type="Gene3D" id="1.20.58.110">
    <property type="entry name" value="Ribosomal protein S20"/>
    <property type="match status" value="1"/>
</dbReference>
<dbReference type="HAMAP" id="MF_00500">
    <property type="entry name" value="Ribosomal_bS20"/>
    <property type="match status" value="1"/>
</dbReference>
<dbReference type="InterPro" id="IPR002583">
    <property type="entry name" value="Ribosomal_bS20"/>
</dbReference>
<dbReference type="InterPro" id="IPR036510">
    <property type="entry name" value="Ribosomal_bS20_sf"/>
</dbReference>
<dbReference type="NCBIfam" id="TIGR00029">
    <property type="entry name" value="S20"/>
    <property type="match status" value="1"/>
</dbReference>
<dbReference type="PANTHER" id="PTHR33398">
    <property type="entry name" value="30S RIBOSOMAL PROTEIN S20"/>
    <property type="match status" value="1"/>
</dbReference>
<dbReference type="PANTHER" id="PTHR33398:SF1">
    <property type="entry name" value="SMALL RIBOSOMAL SUBUNIT PROTEIN BS20C"/>
    <property type="match status" value="1"/>
</dbReference>
<dbReference type="Pfam" id="PF01649">
    <property type="entry name" value="Ribosomal_S20p"/>
    <property type="match status" value="1"/>
</dbReference>
<dbReference type="SUPFAM" id="SSF46992">
    <property type="entry name" value="Ribosomal protein S20"/>
    <property type="match status" value="1"/>
</dbReference>
<organism>
    <name type="scientific">Prochlorococcus marinus (strain AS9601)</name>
    <dbReference type="NCBI Taxonomy" id="146891"/>
    <lineage>
        <taxon>Bacteria</taxon>
        <taxon>Bacillati</taxon>
        <taxon>Cyanobacteriota</taxon>
        <taxon>Cyanophyceae</taxon>
        <taxon>Synechococcales</taxon>
        <taxon>Prochlorococcaceae</taxon>
        <taxon>Prochlorococcus</taxon>
    </lineage>
</organism>
<gene>
    <name evidence="1" type="primary">rpsT</name>
    <name evidence="1" type="synonym">rps20</name>
    <name type="ordered locus">A9601_16911</name>
</gene>
<reference key="1">
    <citation type="journal article" date="2007" name="PLoS Genet.">
        <title>Patterns and implications of gene gain and loss in the evolution of Prochlorococcus.</title>
        <authorList>
            <person name="Kettler G.C."/>
            <person name="Martiny A.C."/>
            <person name="Huang K."/>
            <person name="Zucker J."/>
            <person name="Coleman M.L."/>
            <person name="Rodrigue S."/>
            <person name="Chen F."/>
            <person name="Lapidus A."/>
            <person name="Ferriera S."/>
            <person name="Johnson J."/>
            <person name="Steglich C."/>
            <person name="Church G.M."/>
            <person name="Richardson P."/>
            <person name="Chisholm S.W."/>
        </authorList>
    </citation>
    <scope>NUCLEOTIDE SEQUENCE [LARGE SCALE GENOMIC DNA]</scope>
    <source>
        <strain>AS9601</strain>
    </source>
</reference>
<sequence>MANNKSAKKRIQIAERNRLMNKSYKSTVRTLTKKTLENCEKYKKNPNEDNKNLVKTSLNKAFSLIDKAVKKNVLHKNNGANRKSKINNFVKTTLTTK</sequence>
<feature type="chain" id="PRO_1000014628" description="Small ribosomal subunit protein bS20">
    <location>
        <begin position="1"/>
        <end position="97"/>
    </location>
</feature>
<evidence type="ECO:0000255" key="1">
    <source>
        <dbReference type="HAMAP-Rule" id="MF_00500"/>
    </source>
</evidence>
<evidence type="ECO:0000305" key="2"/>